<gene>
    <name type="ordered locus">At1g63522</name>
    <name type="ORF">F2K11</name>
</gene>
<feature type="signal peptide" evidence="2">
    <location>
        <begin position="1"/>
        <end position="15"/>
    </location>
</feature>
<feature type="chain" id="PRO_0000379739" description="Defensin-like protein 278">
    <location>
        <begin position="16"/>
        <end position="63"/>
    </location>
</feature>
<feature type="disulfide bond" evidence="1">
    <location>
        <begin position="31"/>
        <end position="48"/>
    </location>
</feature>
<feature type="disulfide bond" evidence="1">
    <location>
        <begin position="37"/>
        <end position="53"/>
    </location>
</feature>
<feature type="disulfide bond" evidence="1">
    <location>
        <begin position="41"/>
        <end position="55"/>
    </location>
</feature>
<dbReference type="EMBL" id="AC008047">
    <property type="status" value="NOT_ANNOTATED_CDS"/>
    <property type="molecule type" value="Genomic_DNA"/>
</dbReference>
<dbReference type="EMBL" id="CP002684">
    <property type="status" value="NOT_ANNOTATED_CDS"/>
    <property type="molecule type" value="Genomic_DNA"/>
</dbReference>
<dbReference type="EMBL" id="EF182844">
    <property type="status" value="NOT_ANNOTATED_CDS"/>
    <property type="molecule type" value="mRNA"/>
</dbReference>
<dbReference type="SMR" id="Q2V4F7"/>
<dbReference type="PaxDb" id="3702-AT1G63522.1"/>
<dbReference type="Araport" id="AT1G63522"/>
<dbReference type="TAIR" id="AT1G63522"/>
<dbReference type="HOGENOM" id="CLU_202089_0_0_1"/>
<dbReference type="InParanoid" id="Q2V4F7"/>
<dbReference type="PhylomeDB" id="Q2V4F7"/>
<dbReference type="PRO" id="PR:Q2V4F7"/>
<dbReference type="Proteomes" id="UP000006548">
    <property type="component" value="Chromosome 1"/>
</dbReference>
<dbReference type="ExpressionAtlas" id="Q2V4F7">
    <property type="expression patterns" value="baseline"/>
</dbReference>
<dbReference type="GO" id="GO:0005576">
    <property type="term" value="C:extracellular region"/>
    <property type="evidence" value="ECO:0007669"/>
    <property type="project" value="UniProtKB-SubCell"/>
</dbReference>
<dbReference type="GO" id="GO:0050832">
    <property type="term" value="P:defense response to fungus"/>
    <property type="evidence" value="ECO:0007669"/>
    <property type="project" value="UniProtKB-KW"/>
</dbReference>
<dbReference type="GO" id="GO:0031640">
    <property type="term" value="P:killing of cells of another organism"/>
    <property type="evidence" value="ECO:0007669"/>
    <property type="project" value="UniProtKB-KW"/>
</dbReference>
<organism>
    <name type="scientific">Arabidopsis thaliana</name>
    <name type="common">Mouse-ear cress</name>
    <dbReference type="NCBI Taxonomy" id="3702"/>
    <lineage>
        <taxon>Eukaryota</taxon>
        <taxon>Viridiplantae</taxon>
        <taxon>Streptophyta</taxon>
        <taxon>Embryophyta</taxon>
        <taxon>Tracheophyta</taxon>
        <taxon>Spermatophyta</taxon>
        <taxon>Magnoliopsida</taxon>
        <taxon>eudicotyledons</taxon>
        <taxon>Gunneridae</taxon>
        <taxon>Pentapetalae</taxon>
        <taxon>rosids</taxon>
        <taxon>malvids</taxon>
        <taxon>Brassicales</taxon>
        <taxon>Brassicaceae</taxon>
        <taxon>Camelineae</taxon>
        <taxon>Arabidopsis</taxon>
    </lineage>
</organism>
<keyword id="KW-0929">Antimicrobial</keyword>
<keyword id="KW-1015">Disulfide bond</keyword>
<keyword id="KW-0295">Fungicide</keyword>
<keyword id="KW-0611">Plant defense</keyword>
<keyword id="KW-1185">Reference proteome</keyword>
<keyword id="KW-0964">Secreted</keyword>
<keyword id="KW-0732">Signal</keyword>
<reference key="1">
    <citation type="journal article" date="2000" name="Nature">
        <title>Sequence and analysis of chromosome 1 of the plant Arabidopsis thaliana.</title>
        <authorList>
            <person name="Theologis A."/>
            <person name="Ecker J.R."/>
            <person name="Palm C.J."/>
            <person name="Federspiel N.A."/>
            <person name="Kaul S."/>
            <person name="White O."/>
            <person name="Alonso J."/>
            <person name="Altafi H."/>
            <person name="Araujo R."/>
            <person name="Bowman C.L."/>
            <person name="Brooks S.Y."/>
            <person name="Buehler E."/>
            <person name="Chan A."/>
            <person name="Chao Q."/>
            <person name="Chen H."/>
            <person name="Cheuk R.F."/>
            <person name="Chin C.W."/>
            <person name="Chung M.K."/>
            <person name="Conn L."/>
            <person name="Conway A.B."/>
            <person name="Conway A.R."/>
            <person name="Creasy T.H."/>
            <person name="Dewar K."/>
            <person name="Dunn P."/>
            <person name="Etgu P."/>
            <person name="Feldblyum T.V."/>
            <person name="Feng J.-D."/>
            <person name="Fong B."/>
            <person name="Fujii C.Y."/>
            <person name="Gill J.E."/>
            <person name="Goldsmith A.D."/>
            <person name="Haas B."/>
            <person name="Hansen N.F."/>
            <person name="Hughes B."/>
            <person name="Huizar L."/>
            <person name="Hunter J.L."/>
            <person name="Jenkins J."/>
            <person name="Johnson-Hopson C."/>
            <person name="Khan S."/>
            <person name="Khaykin E."/>
            <person name="Kim C.J."/>
            <person name="Koo H.L."/>
            <person name="Kremenetskaia I."/>
            <person name="Kurtz D.B."/>
            <person name="Kwan A."/>
            <person name="Lam B."/>
            <person name="Langin-Hooper S."/>
            <person name="Lee A."/>
            <person name="Lee J.M."/>
            <person name="Lenz C.A."/>
            <person name="Li J.H."/>
            <person name="Li Y.-P."/>
            <person name="Lin X."/>
            <person name="Liu S.X."/>
            <person name="Liu Z.A."/>
            <person name="Luros J.S."/>
            <person name="Maiti R."/>
            <person name="Marziali A."/>
            <person name="Militscher J."/>
            <person name="Miranda M."/>
            <person name="Nguyen M."/>
            <person name="Nierman W.C."/>
            <person name="Osborne B.I."/>
            <person name="Pai G."/>
            <person name="Peterson J."/>
            <person name="Pham P.K."/>
            <person name="Rizzo M."/>
            <person name="Rooney T."/>
            <person name="Rowley D."/>
            <person name="Sakano H."/>
            <person name="Salzberg S.L."/>
            <person name="Schwartz J.R."/>
            <person name="Shinn P."/>
            <person name="Southwick A.M."/>
            <person name="Sun H."/>
            <person name="Tallon L.J."/>
            <person name="Tambunga G."/>
            <person name="Toriumi M.J."/>
            <person name="Town C.D."/>
            <person name="Utterback T."/>
            <person name="Van Aken S."/>
            <person name="Vaysberg M."/>
            <person name="Vysotskaia V.S."/>
            <person name="Walker M."/>
            <person name="Wu D."/>
            <person name="Yu G."/>
            <person name="Fraser C.M."/>
            <person name="Venter J.C."/>
            <person name="Davis R.W."/>
        </authorList>
    </citation>
    <scope>NUCLEOTIDE SEQUENCE [LARGE SCALE GENOMIC DNA]</scope>
    <source>
        <strain>cv. Columbia</strain>
    </source>
</reference>
<reference key="2">
    <citation type="journal article" date="2017" name="Plant J.">
        <title>Araport11: a complete reannotation of the Arabidopsis thaliana reference genome.</title>
        <authorList>
            <person name="Cheng C.Y."/>
            <person name="Krishnakumar V."/>
            <person name="Chan A.P."/>
            <person name="Thibaud-Nissen F."/>
            <person name="Schobel S."/>
            <person name="Town C.D."/>
        </authorList>
    </citation>
    <scope>GENOME REANNOTATION</scope>
    <source>
        <strain>cv. Columbia</strain>
    </source>
</reference>
<reference key="3">
    <citation type="journal article" date="2007" name="Plant J.">
        <title>Small cysteine-rich peptides resembling antimicrobial peptides have been under-predicted in plants.</title>
        <authorList>
            <person name="Silverstein K.A.T."/>
            <person name="Moskal W.A. Jr."/>
            <person name="Wu H.C."/>
            <person name="Underwood B.A."/>
            <person name="Graham M.A."/>
            <person name="Town C.D."/>
            <person name="VandenBosch K.A."/>
        </authorList>
    </citation>
    <scope>NUCLEOTIDE SEQUENCE [LARGE SCALE MRNA] OF 11-63</scope>
    <source>
        <strain>cv. Columbia</strain>
    </source>
</reference>
<reference key="4">
    <citation type="journal article" date="2005" name="Plant Physiol.">
        <title>Genome organization of more than 300 defensin-like genes in Arabidopsis.</title>
        <authorList>
            <person name="Silverstein K.A.T."/>
            <person name="Graham M.A."/>
            <person name="Paape T.D."/>
            <person name="VandenBosch K.A."/>
        </authorList>
    </citation>
    <scope>GENE FAMILY</scope>
</reference>
<protein>
    <recommendedName>
        <fullName>Defensin-like protein 278</fullName>
    </recommendedName>
</protein>
<name>DF278_ARATH</name>
<accession>Q2V4F7</accession>
<comment type="subcellular location">
    <subcellularLocation>
        <location evidence="1">Secreted</location>
    </subcellularLocation>
</comment>
<comment type="similarity">
    <text evidence="3">Belongs to the DEFL family.</text>
</comment>
<comment type="caution">
    <text evidence="3">Lacks 1 of the 4 disulfide bonds, which are conserved features of the family.</text>
</comment>
<proteinExistence type="inferred from homology"/>
<sequence>MSLVYMYMYIGVVMSARIQESTNDILKPITCNTNADCAKFCKGPIHNCVYHTCQCVPGNPHCC</sequence>
<evidence type="ECO:0000250" key="1"/>
<evidence type="ECO:0000255" key="2"/>
<evidence type="ECO:0000305" key="3"/>